<name>KDGD_CERS4</name>
<sequence length="301" mass="32004">MDPQQIKAALGSGLLSFPVTPFDAENRFAAAPYQKHVEWLSGFDAPVLFAAGGTGEFFSLTPDEIPAIVKAAKESAGKTAIVSGCGYGTEIARGIARSVEAAGGDGILLLPHYLIDAPQEGLYAHVRAVCQATGMGVMVYNRDNAVLQADTLARLCDDCPNLVGFKDGTGDIGLVRQITAKMGDRLTYLGGMPTAELFAEAYLGASFTTYSSAVFNFVPALANKFYAALRAGDRATCESILNSFFYPFMELRSRRKGYAVAAVKAGVRLVGFDAGPVRAPLSDLTGEEEEILKALIDAHRE</sequence>
<evidence type="ECO:0000255" key="1">
    <source>
        <dbReference type="HAMAP-Rule" id="MF_00694"/>
    </source>
</evidence>
<gene>
    <name type="ordered locus">RHOS4_36970</name>
    <name type="ORF">RSP_3655</name>
</gene>
<comment type="catalytic activity">
    <reaction evidence="1">
        <text>5-dehydro-4-deoxy-D-glucarate + H(+) = 2,5-dioxopentanoate + CO2 + H2O</text>
        <dbReference type="Rhea" id="RHEA:24608"/>
        <dbReference type="ChEBI" id="CHEBI:15377"/>
        <dbReference type="ChEBI" id="CHEBI:15378"/>
        <dbReference type="ChEBI" id="CHEBI:16526"/>
        <dbReference type="ChEBI" id="CHEBI:42819"/>
        <dbReference type="ChEBI" id="CHEBI:58136"/>
        <dbReference type="EC" id="4.2.1.41"/>
    </reaction>
</comment>
<comment type="pathway">
    <text evidence="1">Carbohydrate acid metabolism; D-glucarate degradation; 2,5-dioxopentanoate from D-glucarate: step 2/2.</text>
</comment>
<comment type="similarity">
    <text evidence="1">Belongs to the DapA family.</text>
</comment>
<protein>
    <recommendedName>
        <fullName evidence="1">Probable 5-dehydro-4-deoxyglucarate dehydratase</fullName>
        <ecNumber evidence="1">4.2.1.41</ecNumber>
    </recommendedName>
    <alternativeName>
        <fullName evidence="1">5-keto-4-deoxy-glucarate dehydratase</fullName>
        <shortName evidence="1">KDGDH</shortName>
    </alternativeName>
</protein>
<dbReference type="EC" id="4.2.1.41" evidence="1"/>
<dbReference type="EMBL" id="CP000144">
    <property type="protein sequence ID" value="ABA81265.1"/>
    <property type="molecule type" value="Genomic_DNA"/>
</dbReference>
<dbReference type="RefSeq" id="WP_011339506.1">
    <property type="nucleotide sequence ID" value="NC_007494.2"/>
</dbReference>
<dbReference type="RefSeq" id="YP_355166.1">
    <property type="nucleotide sequence ID" value="NC_007494.2"/>
</dbReference>
<dbReference type="SMR" id="Q3IW19"/>
<dbReference type="STRING" id="272943.RSP_3655"/>
<dbReference type="EnsemblBacteria" id="ABA81265">
    <property type="protein sequence ID" value="ABA81265"/>
    <property type="gene ID" value="RSP_3655"/>
</dbReference>
<dbReference type="GeneID" id="3722145"/>
<dbReference type="KEGG" id="rsp:RSP_3655"/>
<dbReference type="PATRIC" id="fig|272943.9.peg.4096"/>
<dbReference type="eggNOG" id="COG0329">
    <property type="taxonomic scope" value="Bacteria"/>
</dbReference>
<dbReference type="OrthoDB" id="8995637at2"/>
<dbReference type="PhylomeDB" id="Q3IW19"/>
<dbReference type="UniPathway" id="UPA00564">
    <property type="reaction ID" value="UER00628"/>
</dbReference>
<dbReference type="Proteomes" id="UP000002703">
    <property type="component" value="Chromosome 2"/>
</dbReference>
<dbReference type="GO" id="GO:0008840">
    <property type="term" value="F:4-hydroxy-tetrahydrodipicolinate synthase activity"/>
    <property type="evidence" value="ECO:0007669"/>
    <property type="project" value="TreeGrafter"/>
</dbReference>
<dbReference type="GO" id="GO:0047448">
    <property type="term" value="F:5-dehydro-4-deoxyglucarate dehydratase activity"/>
    <property type="evidence" value="ECO:0007669"/>
    <property type="project" value="UniProtKB-UniRule"/>
</dbReference>
<dbReference type="GO" id="GO:0042838">
    <property type="term" value="P:D-glucarate catabolic process"/>
    <property type="evidence" value="ECO:0007669"/>
    <property type="project" value="UniProtKB-UniRule"/>
</dbReference>
<dbReference type="CDD" id="cd00951">
    <property type="entry name" value="KDGDH"/>
    <property type="match status" value="1"/>
</dbReference>
<dbReference type="Gene3D" id="3.20.20.70">
    <property type="entry name" value="Aldolase class I"/>
    <property type="match status" value="1"/>
</dbReference>
<dbReference type="HAMAP" id="MF_00694">
    <property type="entry name" value="KDGDH"/>
    <property type="match status" value="1"/>
</dbReference>
<dbReference type="InterPro" id="IPR013785">
    <property type="entry name" value="Aldolase_TIM"/>
</dbReference>
<dbReference type="InterPro" id="IPR002220">
    <property type="entry name" value="DapA-like"/>
</dbReference>
<dbReference type="InterPro" id="IPR017655">
    <property type="entry name" value="Dehydro-deoxyglucarate_dehyd"/>
</dbReference>
<dbReference type="NCBIfam" id="TIGR03249">
    <property type="entry name" value="KdgD"/>
    <property type="match status" value="1"/>
</dbReference>
<dbReference type="NCBIfam" id="NF002958">
    <property type="entry name" value="PRK03620.1"/>
    <property type="match status" value="1"/>
</dbReference>
<dbReference type="PANTHER" id="PTHR12128:SF19">
    <property type="entry name" value="5-DEHYDRO-4-DEOXYGLUCARATE DEHYDRATASE 2-RELATED"/>
    <property type="match status" value="1"/>
</dbReference>
<dbReference type="PANTHER" id="PTHR12128">
    <property type="entry name" value="DIHYDRODIPICOLINATE SYNTHASE"/>
    <property type="match status" value="1"/>
</dbReference>
<dbReference type="Pfam" id="PF00701">
    <property type="entry name" value="DHDPS"/>
    <property type="match status" value="1"/>
</dbReference>
<dbReference type="PIRSF" id="PIRSF001365">
    <property type="entry name" value="DHDPS"/>
    <property type="match status" value="1"/>
</dbReference>
<dbReference type="SMART" id="SM01130">
    <property type="entry name" value="DHDPS"/>
    <property type="match status" value="1"/>
</dbReference>
<dbReference type="SUPFAM" id="SSF51569">
    <property type="entry name" value="Aldolase"/>
    <property type="match status" value="1"/>
</dbReference>
<feature type="chain" id="PRO_1000062045" description="Probable 5-dehydro-4-deoxyglucarate dehydratase">
    <location>
        <begin position="1"/>
        <end position="301"/>
    </location>
</feature>
<proteinExistence type="inferred from homology"/>
<accession>Q3IW19</accession>
<reference key="1">
    <citation type="submission" date="2005-09" db="EMBL/GenBank/DDBJ databases">
        <title>Complete sequence of chromosome 2 of Rhodobacter sphaeroides 2.4.1.</title>
        <authorList>
            <person name="Copeland A."/>
            <person name="Lucas S."/>
            <person name="Lapidus A."/>
            <person name="Barry K."/>
            <person name="Detter J.C."/>
            <person name="Glavina T."/>
            <person name="Hammon N."/>
            <person name="Israni S."/>
            <person name="Pitluck S."/>
            <person name="Richardson P."/>
            <person name="Mackenzie C."/>
            <person name="Choudhary M."/>
            <person name="Larimer F."/>
            <person name="Hauser L.J."/>
            <person name="Land M."/>
            <person name="Donohue T.J."/>
            <person name="Kaplan S."/>
        </authorList>
    </citation>
    <scope>NUCLEOTIDE SEQUENCE [LARGE SCALE GENOMIC DNA]</scope>
    <source>
        <strain>ATCC 17023 / DSM 158 / JCM 6121 / CCUG 31486 / LMG 2827 / NBRC 12203 / NCIMB 8253 / ATH 2.4.1.</strain>
    </source>
</reference>
<organism>
    <name type="scientific">Cereibacter sphaeroides (strain ATCC 17023 / DSM 158 / JCM 6121 / CCUG 31486 / LMG 2827 / NBRC 12203 / NCIMB 8253 / ATH 2.4.1.)</name>
    <name type="common">Rhodobacter sphaeroides</name>
    <dbReference type="NCBI Taxonomy" id="272943"/>
    <lineage>
        <taxon>Bacteria</taxon>
        <taxon>Pseudomonadati</taxon>
        <taxon>Pseudomonadota</taxon>
        <taxon>Alphaproteobacteria</taxon>
        <taxon>Rhodobacterales</taxon>
        <taxon>Paracoccaceae</taxon>
        <taxon>Cereibacter</taxon>
    </lineage>
</organism>
<keyword id="KW-0456">Lyase</keyword>
<keyword id="KW-1185">Reference proteome</keyword>